<sequence length="447" mass="49421">MLHRYLPMTEEDKKEMLQTIGVQTIDELFSDIPESVRFKGDLKIKEAKSEPELLKELSQMASKNANLKEYASFLGAGVYDHYAPVIVDHVISRSEFYTAYTPYQPEISQGELQAIFEFQTMICELTGMDVANSSMYDGGTALAEAAMLAAGHTRKKKILVSSAVHPESRAVLETYAKGQHLEVVEINHKDGVTDLDVLQSEVDDTVACVIVQYPNFFGQVEKLADIEKIVHQQKSLFIVSSNPLSLGALTPPGKFGADIVIGDAQPFGIPTQFGGPHCGYFATTKAFMRKIPGRLVGQTVDSDGKRGFVLTLQAREQHIRRDKATSNICSNQALNALAASVAMTALGKQGVKEMARQNISKAQYAKRQFEAKGFTVTFAGPFFNEFVVDCKRPVKEVNDALLQKNIIGGYDLGRDYKEHENHMLVAVTELRTKEEIDTLVNEMGAIQ</sequence>
<feature type="chain" id="PRO_1000147977" description="Probable glycine dehydrogenase (decarboxylating) subunit 1">
    <location>
        <begin position="1"/>
        <end position="447"/>
    </location>
</feature>
<keyword id="KW-0560">Oxidoreductase</keyword>
<proteinExistence type="inferred from homology"/>
<evidence type="ECO:0000255" key="1">
    <source>
        <dbReference type="HAMAP-Rule" id="MF_00712"/>
    </source>
</evidence>
<protein>
    <recommendedName>
        <fullName evidence="1">Probable glycine dehydrogenase (decarboxylating) subunit 1</fullName>
        <ecNumber evidence="1">1.4.4.2</ecNumber>
    </recommendedName>
    <alternativeName>
        <fullName evidence="1">Glycine cleavage system P-protein subunit 1</fullName>
    </alternativeName>
    <alternativeName>
        <fullName evidence="1">Glycine decarboxylase subunit 1</fullName>
    </alternativeName>
    <alternativeName>
        <fullName evidence="1">Glycine dehydrogenase (aminomethyl-transferring) subunit 1</fullName>
    </alternativeName>
</protein>
<dbReference type="EC" id="1.4.4.2" evidence="1"/>
<dbReference type="EMBL" id="CP001407">
    <property type="protein sequence ID" value="ACO30172.1"/>
    <property type="molecule type" value="Genomic_DNA"/>
</dbReference>
<dbReference type="RefSeq" id="WP_000903231.1">
    <property type="nucleotide sequence ID" value="NZ_CP009318.1"/>
</dbReference>
<dbReference type="SMR" id="C1ERU9"/>
<dbReference type="GeneID" id="93006874"/>
<dbReference type="KEGG" id="bcx:BCA_4335"/>
<dbReference type="PATRIC" id="fig|572264.18.peg.4287"/>
<dbReference type="Proteomes" id="UP000002210">
    <property type="component" value="Chromosome"/>
</dbReference>
<dbReference type="GO" id="GO:0004375">
    <property type="term" value="F:glycine dehydrogenase (decarboxylating) activity"/>
    <property type="evidence" value="ECO:0007669"/>
    <property type="project" value="UniProtKB-EC"/>
</dbReference>
<dbReference type="GO" id="GO:0019464">
    <property type="term" value="P:glycine decarboxylation via glycine cleavage system"/>
    <property type="evidence" value="ECO:0007669"/>
    <property type="project" value="UniProtKB-UniRule"/>
</dbReference>
<dbReference type="GO" id="GO:0009116">
    <property type="term" value="P:nucleoside metabolic process"/>
    <property type="evidence" value="ECO:0007669"/>
    <property type="project" value="InterPro"/>
</dbReference>
<dbReference type="CDD" id="cd00613">
    <property type="entry name" value="GDC-P"/>
    <property type="match status" value="1"/>
</dbReference>
<dbReference type="FunFam" id="3.40.640.10:FF:000113">
    <property type="entry name" value="Probable glycine dehydrogenase (decarboxylating) subunit 1"/>
    <property type="match status" value="1"/>
</dbReference>
<dbReference type="Gene3D" id="3.90.1150.10">
    <property type="entry name" value="Aspartate Aminotransferase, domain 1"/>
    <property type="match status" value="1"/>
</dbReference>
<dbReference type="Gene3D" id="3.40.640.10">
    <property type="entry name" value="Type I PLP-dependent aspartate aminotransferase-like (Major domain)"/>
    <property type="match status" value="1"/>
</dbReference>
<dbReference type="HAMAP" id="MF_00712">
    <property type="entry name" value="GcvPA"/>
    <property type="match status" value="1"/>
</dbReference>
<dbReference type="InterPro" id="IPR023010">
    <property type="entry name" value="GcvPA"/>
</dbReference>
<dbReference type="InterPro" id="IPR049315">
    <property type="entry name" value="GDC-P_N"/>
</dbReference>
<dbReference type="InterPro" id="IPR020581">
    <property type="entry name" value="GDC_P"/>
</dbReference>
<dbReference type="InterPro" id="IPR015424">
    <property type="entry name" value="PyrdxlP-dep_Trfase"/>
</dbReference>
<dbReference type="InterPro" id="IPR015421">
    <property type="entry name" value="PyrdxlP-dep_Trfase_major"/>
</dbReference>
<dbReference type="InterPro" id="IPR015422">
    <property type="entry name" value="PyrdxlP-dep_Trfase_small"/>
</dbReference>
<dbReference type="NCBIfam" id="NF001696">
    <property type="entry name" value="PRK00451.1"/>
    <property type="match status" value="1"/>
</dbReference>
<dbReference type="PANTHER" id="PTHR42806">
    <property type="entry name" value="GLYCINE CLEAVAGE SYSTEM P-PROTEIN"/>
    <property type="match status" value="1"/>
</dbReference>
<dbReference type="PANTHER" id="PTHR42806:SF1">
    <property type="entry name" value="GLYCINE DEHYDROGENASE (DECARBOXYLATING)"/>
    <property type="match status" value="1"/>
</dbReference>
<dbReference type="Pfam" id="PF02347">
    <property type="entry name" value="GDC-P"/>
    <property type="match status" value="1"/>
</dbReference>
<dbReference type="PIRSF" id="PIRSF006815">
    <property type="entry name" value="GcvPA"/>
    <property type="match status" value="1"/>
</dbReference>
<dbReference type="SUPFAM" id="SSF53383">
    <property type="entry name" value="PLP-dependent transferases"/>
    <property type="match status" value="1"/>
</dbReference>
<name>GCSPA_BACC3</name>
<comment type="function">
    <text evidence="1">The glycine cleavage system catalyzes the degradation of glycine. The P protein binds the alpha-amino group of glycine through its pyridoxal phosphate cofactor; CO(2) is released and the remaining methylamine moiety is then transferred to the lipoamide cofactor of the H protein.</text>
</comment>
<comment type="catalytic activity">
    <reaction evidence="1">
        <text>N(6)-[(R)-lipoyl]-L-lysyl-[glycine-cleavage complex H protein] + glycine + H(+) = N(6)-[(R)-S(8)-aminomethyldihydrolipoyl]-L-lysyl-[glycine-cleavage complex H protein] + CO2</text>
        <dbReference type="Rhea" id="RHEA:24304"/>
        <dbReference type="Rhea" id="RHEA-COMP:10494"/>
        <dbReference type="Rhea" id="RHEA-COMP:10495"/>
        <dbReference type="ChEBI" id="CHEBI:15378"/>
        <dbReference type="ChEBI" id="CHEBI:16526"/>
        <dbReference type="ChEBI" id="CHEBI:57305"/>
        <dbReference type="ChEBI" id="CHEBI:83099"/>
        <dbReference type="ChEBI" id="CHEBI:83143"/>
        <dbReference type="EC" id="1.4.4.2"/>
    </reaction>
</comment>
<comment type="subunit">
    <text evidence="1">The glycine cleavage system is composed of four proteins: P, T, L and H. In this organism, the P 'protein' is a heterodimer of two subunits.</text>
</comment>
<comment type="similarity">
    <text evidence="1">Belongs to the GcvP family. N-terminal subunit subfamily.</text>
</comment>
<reference key="1">
    <citation type="submission" date="2009-02" db="EMBL/GenBank/DDBJ databases">
        <title>Genome sequence of Bacillus cereus 03BB102.</title>
        <authorList>
            <person name="Dodson R.J."/>
            <person name="Jackson P."/>
            <person name="Munk A.C."/>
            <person name="Brettin T."/>
            <person name="Bruce D."/>
            <person name="Detter C."/>
            <person name="Tapia R."/>
            <person name="Han C."/>
            <person name="Sutton G."/>
            <person name="Sims D."/>
        </authorList>
    </citation>
    <scope>NUCLEOTIDE SEQUENCE [LARGE SCALE GENOMIC DNA]</scope>
    <source>
        <strain>03BB102</strain>
    </source>
</reference>
<accession>C1ERU9</accession>
<organism>
    <name type="scientific">Bacillus cereus (strain 03BB102)</name>
    <dbReference type="NCBI Taxonomy" id="572264"/>
    <lineage>
        <taxon>Bacteria</taxon>
        <taxon>Bacillati</taxon>
        <taxon>Bacillota</taxon>
        <taxon>Bacilli</taxon>
        <taxon>Bacillales</taxon>
        <taxon>Bacillaceae</taxon>
        <taxon>Bacillus</taxon>
        <taxon>Bacillus cereus group</taxon>
    </lineage>
</organism>
<gene>
    <name evidence="1" type="primary">gcvPA</name>
    <name type="ordered locus">BCA_4335</name>
</gene>